<organism>
    <name type="scientific">Macaca fascicularis</name>
    <name type="common">Crab-eating macaque</name>
    <name type="synonym">Cynomolgus monkey</name>
    <dbReference type="NCBI Taxonomy" id="9541"/>
    <lineage>
        <taxon>Eukaryota</taxon>
        <taxon>Metazoa</taxon>
        <taxon>Chordata</taxon>
        <taxon>Craniata</taxon>
        <taxon>Vertebrata</taxon>
        <taxon>Euteleostomi</taxon>
        <taxon>Mammalia</taxon>
        <taxon>Eutheria</taxon>
        <taxon>Euarchontoglires</taxon>
        <taxon>Primates</taxon>
        <taxon>Haplorrhini</taxon>
        <taxon>Catarrhini</taxon>
        <taxon>Cercopithecidae</taxon>
        <taxon>Cercopithecinae</taxon>
        <taxon>Macaca</taxon>
    </lineage>
</organism>
<protein>
    <recommendedName>
        <fullName>Protein AAR2 homolog</fullName>
    </recommendedName>
    <alternativeName>
        <fullName>AAR2 splicing factor homolog</fullName>
    </alternativeName>
</protein>
<gene>
    <name type="primary">AAR2</name>
    <name type="ORF">QtsA-15573</name>
</gene>
<dbReference type="EMBL" id="AB168889">
    <property type="protein sequence ID" value="BAE00992.1"/>
    <property type="molecule type" value="mRNA"/>
</dbReference>
<dbReference type="RefSeq" id="NP_001271712.1">
    <property type="nucleotide sequence ID" value="NM_001284783.1"/>
</dbReference>
<dbReference type="SMR" id="Q4R7D0"/>
<dbReference type="STRING" id="9541.ENSMFAP00000014756"/>
<dbReference type="eggNOG" id="KOG3937">
    <property type="taxonomic scope" value="Eukaryota"/>
</dbReference>
<dbReference type="Proteomes" id="UP000233100">
    <property type="component" value="Unplaced"/>
</dbReference>
<dbReference type="GO" id="GO:0005681">
    <property type="term" value="C:spliceosomal complex"/>
    <property type="evidence" value="ECO:0007669"/>
    <property type="project" value="UniProtKB-KW"/>
</dbReference>
<dbReference type="GO" id="GO:0000244">
    <property type="term" value="P:spliceosomal tri-snRNP complex assembly"/>
    <property type="evidence" value="ECO:0007669"/>
    <property type="project" value="TreeGrafter"/>
</dbReference>
<dbReference type="CDD" id="cd13778">
    <property type="entry name" value="Aar2_C"/>
    <property type="match status" value="1"/>
</dbReference>
<dbReference type="CDD" id="cd13777">
    <property type="entry name" value="Aar2_N"/>
    <property type="match status" value="1"/>
</dbReference>
<dbReference type="FunFam" id="1.25.40.550:FF:000001">
    <property type="entry name" value="AAR2 splicing factor homolog"/>
    <property type="match status" value="1"/>
</dbReference>
<dbReference type="FunFam" id="2.60.34.20:FF:000001">
    <property type="entry name" value="protein AAR2 homolog"/>
    <property type="match status" value="1"/>
</dbReference>
<dbReference type="Gene3D" id="2.60.34.20">
    <property type="match status" value="1"/>
</dbReference>
<dbReference type="Gene3D" id="1.25.40.550">
    <property type="entry name" value="Aar2, C-terminal domain-like"/>
    <property type="match status" value="1"/>
</dbReference>
<dbReference type="InterPro" id="IPR007946">
    <property type="entry name" value="AAR2"/>
</dbReference>
<dbReference type="InterPro" id="IPR033648">
    <property type="entry name" value="AAR2_C"/>
</dbReference>
<dbReference type="InterPro" id="IPR038514">
    <property type="entry name" value="AAR2_C_sf"/>
</dbReference>
<dbReference type="InterPro" id="IPR033647">
    <property type="entry name" value="Aar2_N"/>
</dbReference>
<dbReference type="InterPro" id="IPR038516">
    <property type="entry name" value="AAR2_N_sf"/>
</dbReference>
<dbReference type="PANTHER" id="PTHR12689">
    <property type="entry name" value="A1 CISTRON SPLICING FACTOR AAR2-RELATED"/>
    <property type="match status" value="1"/>
</dbReference>
<dbReference type="PANTHER" id="PTHR12689:SF4">
    <property type="entry name" value="PROTEIN AAR2 HOMOLOG"/>
    <property type="match status" value="1"/>
</dbReference>
<dbReference type="Pfam" id="PF05282">
    <property type="entry name" value="AAR2"/>
    <property type="match status" value="1"/>
</dbReference>
<dbReference type="Pfam" id="PF20981">
    <property type="entry name" value="AAR2_1st"/>
    <property type="match status" value="1"/>
</dbReference>
<feature type="initiator methionine" description="Removed" evidence="2">
    <location>
        <position position="1"/>
    </location>
</feature>
<feature type="chain" id="PRO_0000265091" description="Protein AAR2 homolog">
    <location>
        <begin position="2"/>
        <end position="384"/>
    </location>
</feature>
<feature type="modified residue" description="N-acetylalanine" evidence="2">
    <location>
        <position position="2"/>
    </location>
</feature>
<keyword id="KW-0007">Acetylation</keyword>
<keyword id="KW-0507">mRNA processing</keyword>
<keyword id="KW-0508">mRNA splicing</keyword>
<keyword id="KW-1185">Reference proteome</keyword>
<keyword id="KW-0747">Spliceosome</keyword>
<proteinExistence type="evidence at transcript level"/>
<comment type="function">
    <text evidence="1">Component of the U5 snRNP complex that is required for spliceosome assembly and for pre-mRNA splicing.</text>
</comment>
<comment type="subunit">
    <text evidence="1 2">Interacts with PRPF8 (via RNase H homology domain) (By similarity). Component of a U5 snRNP complex that contains PRPF8 (By similarity).</text>
</comment>
<comment type="similarity">
    <text evidence="3">Belongs to the AAR2 family.</text>
</comment>
<evidence type="ECO:0000250" key="1">
    <source>
        <dbReference type="UniProtKB" id="P32357"/>
    </source>
</evidence>
<evidence type="ECO:0000250" key="2">
    <source>
        <dbReference type="UniProtKB" id="Q9Y312"/>
    </source>
</evidence>
<evidence type="ECO:0000305" key="3"/>
<accession>Q4R7D0</accession>
<reference key="1">
    <citation type="submission" date="2005-06" db="EMBL/GenBank/DDBJ databases">
        <title>DNA sequences of macaque genes expressed in brain or testis and its evolutionary implications.</title>
        <authorList>
            <consortium name="International consortium for macaque cDNA sequencing and analysis"/>
        </authorList>
    </citation>
    <scope>NUCLEOTIDE SEQUENCE [LARGE SCALE MRNA]</scope>
    <source>
        <tissue>Testis</tissue>
    </source>
</reference>
<name>AAR2_MACFA</name>
<sequence length="384" mass="43363">MAALQMDPELAKRLFFEGATVVILNMPKGTEFGIDCNSWEVGPKFRGVKMIPPGIHFLYYSSVDKANPKEVGPRMGFFLSLYQRGLTVLRWSTLREEVDLSPAPESEVEAMRANLQELDQFLGPYPYATLKKWISLTNFISEATVEKLQPENRQICAFSDVLPVLSMKHTKDRVGQNLPRCGTECKSYQEGLARLPEMKPRAGTEIRFSELPTQMFPAGATPAEITKHSMDLSYALQTVLNKQFPSSPQDVLGELQFAFVCFLLGNVYEAFEHWKRLLNLLCRSEAAMVKHHTLYINLISILYHQLGEIPADFFVDIVSQDNFLTSTLQVFFSSACSIAVDATLRKKAEKFQAHLTKKFRWDFAAEPEDCAPVVVELPEGTEMG</sequence>